<comment type="function">
    <text evidence="1">Acts as a neurotoxin by inhibiting voltage-gated potassium channels (Kv).</text>
</comment>
<comment type="subcellular location">
    <subcellularLocation>
        <location evidence="1">Secreted</location>
    </subcellularLocation>
</comment>
<comment type="tissue specificity">
    <text>Expressed by the venom duct.</text>
</comment>
<comment type="domain">
    <text>The cysteine framework is XI (C-C-CC-CC-C-C).</text>
</comment>
<comment type="PTM">
    <text evidence="1">Contains 4 disulfide bonds.</text>
</comment>
<comment type="similarity">
    <text evidence="3">Belongs to the conopeptide I2-like superfamily.</text>
</comment>
<sequence length="83" mass="9162">MARQMMTVGCLILIVVLLDMMVPVFNTCPGQYDECGNGPEEGECCGTHNYCCKNACTTYHHCHGGRDAGKLLRSLKKLKLTTH</sequence>
<protein>
    <recommendedName>
        <fullName>Turripeptide Lol11.1</fullName>
    </recommendedName>
    <alternativeName>
        <fullName>OL105</fullName>
    </alternativeName>
</protein>
<keyword id="KW-1015">Disulfide bond</keyword>
<keyword id="KW-0872">Ion channel impairing toxin</keyword>
<keyword id="KW-0528">Neurotoxin</keyword>
<keyword id="KW-0632">Potassium channel impairing toxin</keyword>
<keyword id="KW-0964">Secreted</keyword>
<keyword id="KW-0732">Signal</keyword>
<keyword id="KW-0800">Toxin</keyword>
<keyword id="KW-1220">Voltage-gated potassium channel impairing toxin</keyword>
<reference key="1">
    <citation type="journal article" date="2006" name="J. Mol. Evol.">
        <title>Genes expressed in a turrid venom duct: divergence and similarity to conotoxins.</title>
        <authorList>
            <person name="Watkins M."/>
            <person name="Hillyard D.R."/>
            <person name="Olivera B.M."/>
        </authorList>
    </citation>
    <scope>NUCLEOTIDE SEQUENCE [MRNA]</scope>
    <source>
        <tissue>Venom duct</tissue>
    </source>
</reference>
<evidence type="ECO:0000250" key="1"/>
<evidence type="ECO:0000255" key="2"/>
<evidence type="ECO:0000305" key="3"/>
<name>TUB1_IOTOL</name>
<feature type="signal peptide" evidence="2">
    <location>
        <begin position="1"/>
        <end position="27"/>
    </location>
</feature>
<feature type="chain" id="PRO_0000419848" description="Turripeptide Lol11.1">
    <location>
        <begin position="28"/>
        <end position="83"/>
    </location>
</feature>
<organism>
    <name type="scientific">Iotyrris olangoensis</name>
    <name type="common">Sea snail</name>
    <name type="synonym">Lophiotoma olangoensis</name>
    <dbReference type="NCBI Taxonomy" id="2420066"/>
    <lineage>
        <taxon>Eukaryota</taxon>
        <taxon>Metazoa</taxon>
        <taxon>Spiralia</taxon>
        <taxon>Lophotrochozoa</taxon>
        <taxon>Mollusca</taxon>
        <taxon>Gastropoda</taxon>
        <taxon>Caenogastropoda</taxon>
        <taxon>Neogastropoda</taxon>
        <taxon>Conoidea</taxon>
        <taxon>Turridae</taxon>
        <taxon>Iotyrris</taxon>
    </lineage>
</organism>
<accession>P0DKN2</accession>
<proteinExistence type="evidence at transcript level"/>
<dbReference type="GO" id="GO:0005576">
    <property type="term" value="C:extracellular region"/>
    <property type="evidence" value="ECO:0007669"/>
    <property type="project" value="UniProtKB-SubCell"/>
</dbReference>
<dbReference type="GO" id="GO:0015459">
    <property type="term" value="F:potassium channel regulator activity"/>
    <property type="evidence" value="ECO:0007669"/>
    <property type="project" value="UniProtKB-KW"/>
</dbReference>
<dbReference type="GO" id="GO:0090729">
    <property type="term" value="F:toxin activity"/>
    <property type="evidence" value="ECO:0007669"/>
    <property type="project" value="UniProtKB-KW"/>
</dbReference>